<accession>B8HFN6</accession>
<comment type="function">
    <text evidence="1">Associates with the EF-Tu.GDP complex and induces the exchange of GDP to GTP. It remains bound to the aminoacyl-tRNA.EF-Tu.GTP complex up to the GTP hydrolysis stage on the ribosome.</text>
</comment>
<comment type="subcellular location">
    <subcellularLocation>
        <location evidence="1">Cytoplasm</location>
    </subcellularLocation>
</comment>
<comment type="similarity">
    <text evidence="1">Belongs to the EF-Ts family.</text>
</comment>
<gene>
    <name evidence="1" type="primary">tsf</name>
    <name type="ordered locus">Achl_1385</name>
</gene>
<protein>
    <recommendedName>
        <fullName evidence="1">Elongation factor Ts</fullName>
        <shortName evidence="1">EF-Ts</shortName>
    </recommendedName>
</protein>
<keyword id="KW-0963">Cytoplasm</keyword>
<keyword id="KW-0251">Elongation factor</keyword>
<keyword id="KW-0648">Protein biosynthesis</keyword>
<evidence type="ECO:0000255" key="1">
    <source>
        <dbReference type="HAMAP-Rule" id="MF_00050"/>
    </source>
</evidence>
<name>EFTS_PSECP</name>
<organism>
    <name type="scientific">Pseudarthrobacter chlorophenolicus (strain ATCC 700700 / DSM 12829 / CIP 107037 / JCM 12360 / KCTC 9906 / NCIMB 13794 / A6)</name>
    <name type="common">Arthrobacter chlorophenolicus</name>
    <dbReference type="NCBI Taxonomy" id="452863"/>
    <lineage>
        <taxon>Bacteria</taxon>
        <taxon>Bacillati</taxon>
        <taxon>Actinomycetota</taxon>
        <taxon>Actinomycetes</taxon>
        <taxon>Micrococcales</taxon>
        <taxon>Micrococcaceae</taxon>
        <taxon>Pseudarthrobacter</taxon>
    </lineage>
</organism>
<reference key="1">
    <citation type="submission" date="2009-01" db="EMBL/GenBank/DDBJ databases">
        <title>Complete sequence of chromosome of Arthrobacter chlorophenolicus A6.</title>
        <authorList>
            <consortium name="US DOE Joint Genome Institute"/>
            <person name="Lucas S."/>
            <person name="Copeland A."/>
            <person name="Lapidus A."/>
            <person name="Glavina del Rio T."/>
            <person name="Tice H."/>
            <person name="Bruce D."/>
            <person name="Goodwin L."/>
            <person name="Pitluck S."/>
            <person name="Goltsman E."/>
            <person name="Clum A."/>
            <person name="Larimer F."/>
            <person name="Land M."/>
            <person name="Hauser L."/>
            <person name="Kyrpides N."/>
            <person name="Mikhailova N."/>
            <person name="Jansson J."/>
            <person name="Richardson P."/>
        </authorList>
    </citation>
    <scope>NUCLEOTIDE SEQUENCE [LARGE SCALE GENOMIC DNA]</scope>
    <source>
        <strain>ATCC 700700 / DSM 12829 / CIP 107037 / JCM 12360 / KCTC 9906 / NCIMB 13794 / A6</strain>
    </source>
</reference>
<dbReference type="EMBL" id="CP001341">
    <property type="protein sequence ID" value="ACL39375.1"/>
    <property type="molecule type" value="Genomic_DNA"/>
</dbReference>
<dbReference type="RefSeq" id="WP_015936598.1">
    <property type="nucleotide sequence ID" value="NC_011886.1"/>
</dbReference>
<dbReference type="SMR" id="B8HFN6"/>
<dbReference type="STRING" id="452863.Achl_1385"/>
<dbReference type="KEGG" id="ach:Achl_1385"/>
<dbReference type="eggNOG" id="COG0264">
    <property type="taxonomic scope" value="Bacteria"/>
</dbReference>
<dbReference type="HOGENOM" id="CLU_047155_0_0_11"/>
<dbReference type="OrthoDB" id="9808348at2"/>
<dbReference type="Proteomes" id="UP000002505">
    <property type="component" value="Chromosome"/>
</dbReference>
<dbReference type="GO" id="GO:0005737">
    <property type="term" value="C:cytoplasm"/>
    <property type="evidence" value="ECO:0007669"/>
    <property type="project" value="UniProtKB-SubCell"/>
</dbReference>
<dbReference type="GO" id="GO:0003746">
    <property type="term" value="F:translation elongation factor activity"/>
    <property type="evidence" value="ECO:0007669"/>
    <property type="project" value="UniProtKB-UniRule"/>
</dbReference>
<dbReference type="CDD" id="cd14275">
    <property type="entry name" value="UBA_EF-Ts"/>
    <property type="match status" value="1"/>
</dbReference>
<dbReference type="FunFam" id="1.10.286.20:FF:000001">
    <property type="entry name" value="Elongation factor Ts"/>
    <property type="match status" value="1"/>
</dbReference>
<dbReference type="FunFam" id="1.10.8.10:FF:000001">
    <property type="entry name" value="Elongation factor Ts"/>
    <property type="match status" value="1"/>
</dbReference>
<dbReference type="Gene3D" id="1.10.286.20">
    <property type="match status" value="1"/>
</dbReference>
<dbReference type="Gene3D" id="1.10.8.10">
    <property type="entry name" value="DNA helicase RuvA subunit, C-terminal domain"/>
    <property type="match status" value="1"/>
</dbReference>
<dbReference type="Gene3D" id="3.30.479.20">
    <property type="entry name" value="Elongation factor Ts, dimerisation domain"/>
    <property type="match status" value="2"/>
</dbReference>
<dbReference type="HAMAP" id="MF_00050">
    <property type="entry name" value="EF_Ts"/>
    <property type="match status" value="1"/>
</dbReference>
<dbReference type="InterPro" id="IPR036402">
    <property type="entry name" value="EF-Ts_dimer_sf"/>
</dbReference>
<dbReference type="InterPro" id="IPR001816">
    <property type="entry name" value="Transl_elong_EFTs/EF1B"/>
</dbReference>
<dbReference type="InterPro" id="IPR014039">
    <property type="entry name" value="Transl_elong_EFTs/EF1B_dimer"/>
</dbReference>
<dbReference type="InterPro" id="IPR018101">
    <property type="entry name" value="Transl_elong_Ts_CS"/>
</dbReference>
<dbReference type="InterPro" id="IPR009060">
    <property type="entry name" value="UBA-like_sf"/>
</dbReference>
<dbReference type="NCBIfam" id="TIGR00116">
    <property type="entry name" value="tsf"/>
    <property type="match status" value="1"/>
</dbReference>
<dbReference type="PANTHER" id="PTHR11741">
    <property type="entry name" value="ELONGATION FACTOR TS"/>
    <property type="match status" value="1"/>
</dbReference>
<dbReference type="PANTHER" id="PTHR11741:SF0">
    <property type="entry name" value="ELONGATION FACTOR TS, MITOCHONDRIAL"/>
    <property type="match status" value="1"/>
</dbReference>
<dbReference type="Pfam" id="PF00889">
    <property type="entry name" value="EF_TS"/>
    <property type="match status" value="1"/>
</dbReference>
<dbReference type="SUPFAM" id="SSF54713">
    <property type="entry name" value="Elongation factor Ts (EF-Ts), dimerisation domain"/>
    <property type="match status" value="1"/>
</dbReference>
<dbReference type="SUPFAM" id="SSF46934">
    <property type="entry name" value="UBA-like"/>
    <property type="match status" value="1"/>
</dbReference>
<dbReference type="PROSITE" id="PS01126">
    <property type="entry name" value="EF_TS_1"/>
    <property type="match status" value="1"/>
</dbReference>
<dbReference type="PROSITE" id="PS01127">
    <property type="entry name" value="EF_TS_2"/>
    <property type="match status" value="1"/>
</dbReference>
<proteinExistence type="inferred from homology"/>
<sequence>MANYTAADIKALRERTGAGMMDVKKALDEANGDAEKAIEIIRIKGLKGATKREGRSTAEGLVAAKVSNGVGVMIEVNCETDFVAKADKFIQLADKVLAVAVESGAADLETLLATDVDGKPLSEVVIEEGAVLGEKVVVRRISRIEGATVDAYLHKTSKDLPAQVGVLFAVDGESEAAATAAHDVAVHIAAMAPNYLTREDVPSDLVESERRIAEETAKAEGKPEAALTKIVEGRVTGFYKGEVLVDQAFAKDAKKSVAQILEEAGVKGTAFARFRVGS</sequence>
<feature type="chain" id="PRO_1000117557" description="Elongation factor Ts">
    <location>
        <begin position="1"/>
        <end position="278"/>
    </location>
</feature>
<feature type="region of interest" description="Involved in Mg(2+) ion dislocation from EF-Tu" evidence="1">
    <location>
        <begin position="80"/>
        <end position="83"/>
    </location>
</feature>